<sequence length="1244" mass="135848">MTVFLGIYRAVYAYEPQTPEELAIQEDDLLYLLQKSDIDDWWTVKKRVIGSDSEEPVGLVPSTYIEEAPVLKKVRAIYDYEQVQNADEELTFHENDVFDVFDDKDADWLLVKSTVSNEFGFIPGNYVEPENGSTSKQEQAPAAAEAPAATPAAAPASAAVLPTNFLPPPQHNDRARMMQSKEDQAPDEDEEGPPPAMPARPTATTETTDATAAAVRSRTRLSYSDNDNDDEEDDYYYNSNSNNVGNHEYNTEYHSWNVTEIEGRKKKKAKLSIGNNKINFIPQKGTPHEWSIDKLVSYDNEKKHMFLEFVDPYRSLELHTGNTTTCEEIMNIIGEYKGASRDPGLREVEMASKSKKRGIVQYDFMAESQDELTIKSGDKVYILDDKKSKDWWMCQLVDSGKSGLVPAQFIEPVRDKKHTESTASGIIKSIKKNFTKSPSRSRSRSRSKSNANASWKDDELQNDVVGSAAGKRSRKSSLSSHKKNSSATKDFPNPKKSRLWVDRSGTFKVDAEFIGCAKGKIHLHKANGVKIAVAADKLSNEDLAYVEKITGFSLEKFKANDGSSSRGTDSRDSERERRRRLKEQEEKERDRRLKERELYELKKARELLDEERSRLQEKELPPIKPPRPTSTTSVPNTTSVPPAESSNNNNSSNKYDWFEFFLNCGVDVSNCQRYTINFDREQLTEDMMPDINNSMLRTLGLREGDIVRVMKHLDKKFGRENIASIPTNATGNMFSQPDGSLNVATSPETSLPQQLLPQTTSPAQTAPSTSAETDDAWTVKPASKSESNLLSKKSEFTGSMQDLLDLQPLEPKKAAASTPEPNLKDLEPVKTGGTTVPAAPVSSAPVSSAPAPLDPFKTGGNNILPLSTGFVMMPMITGGDMLPMQRTGGFVVPQTTFGMQSQVTGGILPVQKTGNGLIPISNTGGAMMPQTTFGAAATVLPLQKTGGGLIPIATTGGAQFPQTSFNVQGQQQLPTGSILPVQKTANGLISANTGVSMPTVQRTGGTMIPQTSFGVSQQLTGGAMMTQPQNTGSAMMPQTSFNAVPQITGGAMMPQTSFNALPQVTGGAMMPLQRTGGALNTFNTGGAMIPQTSFSSQAQNTGGFRPQSQFGLTLQKTGGIAPLNQNQFTGGAMNTLSTGGVLQQQQPQTMNTFNTGGVMQELQMMTTFNTGGAMQQPQMMNTFNTDGIMQQPQMMNTFNTGGAMQQPQQQALQNQPTGFGFGNGPQQSRQANIFNATASNPFGF</sequence>
<protein>
    <recommendedName>
        <fullName>Actin cytoskeleton-regulatory complex protein SLA1</fullName>
    </recommendedName>
</protein>
<gene>
    <name type="primary">SLA1</name>
    <name type="ordered locus">YBL007C</name>
    <name type="ORF">YBL0321</name>
</gene>
<evidence type="ECO:0000255" key="1">
    <source>
        <dbReference type="PROSITE-ProRule" id="PRU00192"/>
    </source>
</evidence>
<evidence type="ECO:0000256" key="2">
    <source>
        <dbReference type="SAM" id="MobiDB-lite"/>
    </source>
</evidence>
<evidence type="ECO:0000269" key="3">
    <source>
    </source>
</evidence>
<evidence type="ECO:0000269" key="4">
    <source>
    </source>
</evidence>
<evidence type="ECO:0000269" key="5">
    <source>
    </source>
</evidence>
<evidence type="ECO:0000269" key="6">
    <source>
    </source>
</evidence>
<evidence type="ECO:0000269" key="7">
    <source>
    </source>
</evidence>
<evidence type="ECO:0000269" key="8">
    <source>
    </source>
</evidence>
<evidence type="ECO:0000269" key="9">
    <source>
    </source>
</evidence>
<evidence type="ECO:0000269" key="10">
    <source>
    </source>
</evidence>
<evidence type="ECO:0000269" key="11">
    <source>
    </source>
</evidence>
<evidence type="ECO:0000269" key="12">
    <source>
    </source>
</evidence>
<evidence type="ECO:0000269" key="13">
    <source>
    </source>
</evidence>
<evidence type="ECO:0000269" key="14">
    <source>
    </source>
</evidence>
<evidence type="ECO:0000269" key="15">
    <source>
    </source>
</evidence>
<evidence type="ECO:0000269" key="16">
    <source>
    </source>
</evidence>
<evidence type="ECO:0000269" key="17">
    <source>
    </source>
</evidence>
<evidence type="ECO:0000269" key="18">
    <source>
    </source>
</evidence>
<evidence type="ECO:0000269" key="19">
    <source>
    </source>
</evidence>
<evidence type="ECO:0000269" key="20">
    <source>
    </source>
</evidence>
<evidence type="ECO:0000269" key="21">
    <source>
    </source>
</evidence>
<evidence type="ECO:0000269" key="22">
    <source>
    </source>
</evidence>
<evidence type="ECO:0000269" key="23">
    <source>
    </source>
</evidence>
<evidence type="ECO:0000305" key="24"/>
<evidence type="ECO:0007744" key="25">
    <source>
    </source>
</evidence>
<evidence type="ECO:0007744" key="26">
    <source>
    </source>
</evidence>
<evidence type="ECO:0007744" key="27">
    <source>
    </source>
</evidence>
<evidence type="ECO:0007829" key="28">
    <source>
        <dbReference type="PDB" id="2HBP"/>
    </source>
</evidence>
<evidence type="ECO:0007829" key="29">
    <source>
        <dbReference type="PDB" id="2JT4"/>
    </source>
</evidence>
<evidence type="ECO:0007829" key="30">
    <source>
        <dbReference type="PDB" id="2V1Q"/>
    </source>
</evidence>
<evidence type="ECO:0007829" key="31">
    <source>
        <dbReference type="PDB" id="3IDW"/>
    </source>
</evidence>
<proteinExistence type="evidence at protein level"/>
<accession>P32790</accession>
<accession>D6VPZ3</accession>
<dbReference type="EMBL" id="Z22810">
    <property type="protein sequence ID" value="CAA80463.1"/>
    <property type="molecule type" value="Genomic_DNA"/>
</dbReference>
<dbReference type="EMBL" id="Z35768">
    <property type="protein sequence ID" value="CAA84826.1"/>
    <property type="molecule type" value="Genomic_DNA"/>
</dbReference>
<dbReference type="EMBL" id="S47695">
    <property type="protein sequence ID" value="AAB23985.1"/>
    <property type="molecule type" value="Genomic_DNA"/>
</dbReference>
<dbReference type="EMBL" id="BK006936">
    <property type="protein sequence ID" value="DAA07113.1"/>
    <property type="molecule type" value="Genomic_DNA"/>
</dbReference>
<dbReference type="PIR" id="S25327">
    <property type="entry name" value="S25327"/>
</dbReference>
<dbReference type="RefSeq" id="NP_009546.1">
    <property type="nucleotide sequence ID" value="NM_001178247.1"/>
</dbReference>
<dbReference type="PDB" id="1SSH">
    <property type="method" value="X-ray"/>
    <property type="resolution" value="1.40 A"/>
    <property type="chains" value="B=191-202"/>
</dbReference>
<dbReference type="PDB" id="1Z9Z">
    <property type="method" value="X-ray"/>
    <property type="resolution" value="1.95 A"/>
    <property type="chains" value="A/B=357-413"/>
</dbReference>
<dbReference type="PDB" id="2HBP">
    <property type="method" value="NMR"/>
    <property type="chains" value="A=495-560"/>
</dbReference>
<dbReference type="PDB" id="2JT4">
    <property type="method" value="NMR"/>
    <property type="chains" value="A=350-420"/>
</dbReference>
<dbReference type="PDB" id="2V1Q">
    <property type="method" value="X-ray"/>
    <property type="resolution" value="1.20 A"/>
    <property type="chains" value="A/B=357-413"/>
</dbReference>
<dbReference type="PDB" id="3IDW">
    <property type="method" value="X-ray"/>
    <property type="resolution" value="1.85 A"/>
    <property type="chains" value="A=653-724"/>
</dbReference>
<dbReference type="PDBsum" id="1SSH"/>
<dbReference type="PDBsum" id="1Z9Z"/>
<dbReference type="PDBsum" id="2HBP"/>
<dbReference type="PDBsum" id="2JT4"/>
<dbReference type="PDBsum" id="2V1Q"/>
<dbReference type="PDBsum" id="3IDW"/>
<dbReference type="SMR" id="P32790"/>
<dbReference type="BioGRID" id="32692">
    <property type="interactions" value="726"/>
</dbReference>
<dbReference type="ComplexPortal" id="CPX-1344">
    <property type="entry name" value="SLAC complex"/>
</dbReference>
<dbReference type="ComplexPortal" id="CPX-426">
    <property type="entry name" value="PAN1 actin cytoskeleton-regulatory complex"/>
</dbReference>
<dbReference type="DIP" id="DIP-695N"/>
<dbReference type="FunCoup" id="P32790">
    <property type="interactions" value="203"/>
</dbReference>
<dbReference type="IntAct" id="P32790">
    <property type="interactions" value="166"/>
</dbReference>
<dbReference type="MINT" id="P32790"/>
<dbReference type="STRING" id="4932.YBL007C"/>
<dbReference type="MoonDB" id="P32790">
    <property type="type" value="Predicted"/>
</dbReference>
<dbReference type="GlyGen" id="P32790">
    <property type="glycosylation" value="3 sites, 1 O-linked glycan (2 sites)"/>
</dbReference>
<dbReference type="iPTMnet" id="P32790"/>
<dbReference type="PaxDb" id="4932-YBL007C"/>
<dbReference type="PeptideAtlas" id="P32790"/>
<dbReference type="EnsemblFungi" id="YBL007C_mRNA">
    <property type="protein sequence ID" value="YBL007C"/>
    <property type="gene ID" value="YBL007C"/>
</dbReference>
<dbReference type="GeneID" id="852276"/>
<dbReference type="KEGG" id="sce:YBL007C"/>
<dbReference type="AGR" id="SGD:S000000103"/>
<dbReference type="SGD" id="S000000103">
    <property type="gene designation" value="SLA1"/>
</dbReference>
<dbReference type="VEuPathDB" id="FungiDB:YBL007C"/>
<dbReference type="eggNOG" id="ENOG502QQC3">
    <property type="taxonomic scope" value="Eukaryota"/>
</dbReference>
<dbReference type="HOGENOM" id="CLU_003674_0_0_1"/>
<dbReference type="InParanoid" id="P32790"/>
<dbReference type="OMA" id="FMAQGED"/>
<dbReference type="OrthoDB" id="26539at2759"/>
<dbReference type="BioCyc" id="YEAST:G3O-28913-MONOMER"/>
<dbReference type="Reactome" id="R-SCE-9013406">
    <property type="pathway name" value="RHOQ GTPase cycle"/>
</dbReference>
<dbReference type="Reactome" id="R-SCE-9696270">
    <property type="pathway name" value="RND2 GTPase cycle"/>
</dbReference>
<dbReference type="BioGRID-ORCS" id="852276">
    <property type="hits" value="2 hits in 10 CRISPR screens"/>
</dbReference>
<dbReference type="CD-CODE" id="18F6A7CA">
    <property type="entry name" value="Endocytic condensates"/>
</dbReference>
<dbReference type="CD-CODE" id="E019EF73">
    <property type="entry name" value="Ede1 condensate"/>
</dbReference>
<dbReference type="EvolutionaryTrace" id="P32790"/>
<dbReference type="PRO" id="PR:P32790"/>
<dbReference type="Proteomes" id="UP000002311">
    <property type="component" value="Chromosome II"/>
</dbReference>
<dbReference type="RNAct" id="P32790">
    <property type="molecule type" value="protein"/>
</dbReference>
<dbReference type="GO" id="GO:0030479">
    <property type="term" value="C:actin cortical patch"/>
    <property type="evidence" value="ECO:0000314"/>
    <property type="project" value="SGD"/>
</dbReference>
<dbReference type="GO" id="GO:1990964">
    <property type="term" value="C:actin cytoskeleton-regulatory complex"/>
    <property type="evidence" value="ECO:0000314"/>
    <property type="project" value="SGD"/>
</dbReference>
<dbReference type="GO" id="GO:0005938">
    <property type="term" value="C:cell cortex"/>
    <property type="evidence" value="ECO:0000314"/>
    <property type="project" value="SGD"/>
</dbReference>
<dbReference type="GO" id="GO:0005935">
    <property type="term" value="C:cellular bud neck"/>
    <property type="evidence" value="ECO:0007005"/>
    <property type="project" value="SGD"/>
</dbReference>
<dbReference type="GO" id="GO:0005737">
    <property type="term" value="C:cytoplasm"/>
    <property type="evidence" value="ECO:0000314"/>
    <property type="project" value="ComplexPortal"/>
</dbReference>
<dbReference type="GO" id="GO:0010008">
    <property type="term" value="C:endosome membrane"/>
    <property type="evidence" value="ECO:0007669"/>
    <property type="project" value="UniProtKB-SubCell"/>
</dbReference>
<dbReference type="GO" id="GO:0043332">
    <property type="term" value="C:mating projection tip"/>
    <property type="evidence" value="ECO:0007005"/>
    <property type="project" value="SGD"/>
</dbReference>
<dbReference type="GO" id="GO:0005634">
    <property type="term" value="C:nucleus"/>
    <property type="evidence" value="ECO:0000314"/>
    <property type="project" value="SGD"/>
</dbReference>
<dbReference type="GO" id="GO:0005886">
    <property type="term" value="C:plasma membrane"/>
    <property type="evidence" value="ECO:0007669"/>
    <property type="project" value="UniProtKB-SubCell"/>
</dbReference>
<dbReference type="GO" id="GO:0140224">
    <property type="term" value="C:SLAC complex"/>
    <property type="evidence" value="ECO:0000314"/>
    <property type="project" value="SGD"/>
</dbReference>
<dbReference type="GO" id="GO:0003779">
    <property type="term" value="F:actin binding"/>
    <property type="evidence" value="ECO:0007669"/>
    <property type="project" value="UniProtKB-KW"/>
</dbReference>
<dbReference type="GO" id="GO:0140312">
    <property type="term" value="F:cargo adaptor activity"/>
    <property type="evidence" value="ECO:0000315"/>
    <property type="project" value="SGD"/>
</dbReference>
<dbReference type="GO" id="GO:0042802">
    <property type="term" value="F:identical protein binding"/>
    <property type="evidence" value="ECO:0000353"/>
    <property type="project" value="IntAct"/>
</dbReference>
<dbReference type="GO" id="GO:0043130">
    <property type="term" value="F:ubiquitin binding"/>
    <property type="evidence" value="ECO:0000314"/>
    <property type="project" value="SGD"/>
</dbReference>
<dbReference type="GO" id="GO:0000147">
    <property type="term" value="P:actin cortical patch assembly"/>
    <property type="evidence" value="ECO:0000315"/>
    <property type="project" value="SGD"/>
</dbReference>
<dbReference type="GO" id="GO:0071555">
    <property type="term" value="P:cell wall organization"/>
    <property type="evidence" value="ECO:0000315"/>
    <property type="project" value="ComplexPortal"/>
</dbReference>
<dbReference type="GO" id="GO:0006897">
    <property type="term" value="P:endocytosis"/>
    <property type="evidence" value="ECO:0000315"/>
    <property type="project" value="SGD"/>
</dbReference>
<dbReference type="GO" id="GO:0034316">
    <property type="term" value="P:negative regulation of Arp2/3 complex-mediated actin nucleation"/>
    <property type="evidence" value="ECO:0000314"/>
    <property type="project" value="SGD"/>
</dbReference>
<dbReference type="GO" id="GO:0030833">
    <property type="term" value="P:regulation of actin filament polymerization"/>
    <property type="evidence" value="ECO:0000318"/>
    <property type="project" value="GO_Central"/>
</dbReference>
<dbReference type="GO" id="GO:0034315">
    <property type="term" value="P:regulation of Arp2/3 complex-mediated actin nucleation"/>
    <property type="evidence" value="ECO:0000314"/>
    <property type="project" value="ComplexPortal"/>
</dbReference>
<dbReference type="CDD" id="cd09532">
    <property type="entry name" value="SAM_SLA1_fungal"/>
    <property type="match status" value="1"/>
</dbReference>
<dbReference type="CDD" id="cd11773">
    <property type="entry name" value="SH3_Sla1p_1"/>
    <property type="match status" value="1"/>
</dbReference>
<dbReference type="CDD" id="cd11775">
    <property type="entry name" value="SH3_Sla1p_3"/>
    <property type="match status" value="1"/>
</dbReference>
<dbReference type="FunFam" id="1.10.150.50:FF:000094">
    <property type="entry name" value="Actin cytoskeleton-regulatory complex protein SLA1"/>
    <property type="match status" value="1"/>
</dbReference>
<dbReference type="FunFam" id="2.30.30.40:FF:000256">
    <property type="entry name" value="Actin cytoskeleton-regulatory complex protein SLA1"/>
    <property type="match status" value="1"/>
</dbReference>
<dbReference type="FunFam" id="2.30.30.40:FF:000300">
    <property type="entry name" value="Actin cytoskeleton-regulatory complex protein SLA1"/>
    <property type="match status" value="1"/>
</dbReference>
<dbReference type="FunFam" id="2.30.30.700:FF:000001">
    <property type="entry name" value="Actin cytoskeleton-regulatory complex protein SLA1"/>
    <property type="match status" value="1"/>
</dbReference>
<dbReference type="FunFam" id="2.30.30.40:FF:000328">
    <property type="entry name" value="Actin cytoskeleton-regulatory complex protein sla1"/>
    <property type="match status" value="1"/>
</dbReference>
<dbReference type="Gene3D" id="2.30.30.40">
    <property type="entry name" value="SH3 Domains"/>
    <property type="match status" value="3"/>
</dbReference>
<dbReference type="Gene3D" id="2.30.30.700">
    <property type="entry name" value="SLA1 homology domain 1"/>
    <property type="match status" value="1"/>
</dbReference>
<dbReference type="Gene3D" id="1.10.150.50">
    <property type="entry name" value="Transcription Factor, Ets-1"/>
    <property type="match status" value="1"/>
</dbReference>
<dbReference type="IDEAL" id="IID50273"/>
<dbReference type="InterPro" id="IPR056996">
    <property type="entry name" value="PH_SLA1"/>
</dbReference>
<dbReference type="InterPro" id="IPR013761">
    <property type="entry name" value="SAM/pointed_sf"/>
</dbReference>
<dbReference type="InterPro" id="IPR036028">
    <property type="entry name" value="SH3-like_dom_sf"/>
</dbReference>
<dbReference type="InterPro" id="IPR001452">
    <property type="entry name" value="SH3_domain"/>
</dbReference>
<dbReference type="InterPro" id="IPR007131">
    <property type="entry name" value="SHD1"/>
</dbReference>
<dbReference type="InterPro" id="IPR035800">
    <property type="entry name" value="Sla1_SH3_1"/>
</dbReference>
<dbReference type="InterPro" id="IPR035821">
    <property type="entry name" value="Sla1_SH3_3"/>
</dbReference>
<dbReference type="PANTHER" id="PTHR15735:SF19">
    <property type="entry name" value="ACTIN CYTOSKELETON-REGULATORY COMPLEX PROTEIN SLA1"/>
    <property type="match status" value="1"/>
</dbReference>
<dbReference type="PANTHER" id="PTHR15735">
    <property type="entry name" value="FCH AND DOUBLE SH3 DOMAINS PROTEIN"/>
    <property type="match status" value="1"/>
</dbReference>
<dbReference type="Pfam" id="PF24081">
    <property type="entry name" value="PH_SLA1"/>
    <property type="match status" value="1"/>
</dbReference>
<dbReference type="Pfam" id="PF00018">
    <property type="entry name" value="SH3_1"/>
    <property type="match status" value="2"/>
</dbReference>
<dbReference type="Pfam" id="PF14604">
    <property type="entry name" value="SH3_9"/>
    <property type="match status" value="1"/>
</dbReference>
<dbReference type="Pfam" id="PF03983">
    <property type="entry name" value="SHD1"/>
    <property type="match status" value="1"/>
</dbReference>
<dbReference type="PRINTS" id="PR00452">
    <property type="entry name" value="SH3DOMAIN"/>
</dbReference>
<dbReference type="SMART" id="SM00326">
    <property type="entry name" value="SH3"/>
    <property type="match status" value="3"/>
</dbReference>
<dbReference type="SUPFAM" id="SSF50044">
    <property type="entry name" value="SH3-domain"/>
    <property type="match status" value="3"/>
</dbReference>
<dbReference type="PROSITE" id="PS50002">
    <property type="entry name" value="SH3"/>
    <property type="match status" value="3"/>
</dbReference>
<keyword id="KW-0002">3D-structure</keyword>
<keyword id="KW-0009">Actin-binding</keyword>
<keyword id="KW-1003">Cell membrane</keyword>
<keyword id="KW-0963">Cytoplasm</keyword>
<keyword id="KW-0206">Cytoskeleton</keyword>
<keyword id="KW-0254">Endocytosis</keyword>
<keyword id="KW-0967">Endosome</keyword>
<keyword id="KW-1017">Isopeptide bond</keyword>
<keyword id="KW-0472">Membrane</keyword>
<keyword id="KW-0539">Nucleus</keyword>
<keyword id="KW-0597">Phosphoprotein</keyword>
<keyword id="KW-1185">Reference proteome</keyword>
<keyword id="KW-0677">Repeat</keyword>
<keyword id="KW-0728">SH3 domain</keyword>
<keyword id="KW-0832">Ubl conjugation</keyword>
<organism>
    <name type="scientific">Saccharomyces cerevisiae (strain ATCC 204508 / S288c)</name>
    <name type="common">Baker's yeast</name>
    <dbReference type="NCBI Taxonomy" id="559292"/>
    <lineage>
        <taxon>Eukaryota</taxon>
        <taxon>Fungi</taxon>
        <taxon>Dikarya</taxon>
        <taxon>Ascomycota</taxon>
        <taxon>Saccharomycotina</taxon>
        <taxon>Saccharomycetes</taxon>
        <taxon>Saccharomycetales</taxon>
        <taxon>Saccharomycetaceae</taxon>
        <taxon>Saccharomyces</taxon>
    </lineage>
</organism>
<name>SLA1_YEAST</name>
<feature type="chain" id="PRO_0000071943" description="Actin cytoskeleton-regulatory complex protein SLA1">
    <location>
        <begin position="1"/>
        <end position="1244"/>
    </location>
</feature>
<feature type="domain" description="SH3 1" evidence="1">
    <location>
        <begin position="3"/>
        <end position="68"/>
    </location>
</feature>
<feature type="domain" description="SH3 2" evidence="1">
    <location>
        <begin position="69"/>
        <end position="132"/>
    </location>
</feature>
<feature type="domain" description="SH3 3" evidence="1">
    <location>
        <begin position="353"/>
        <end position="415"/>
    </location>
</feature>
<feature type="repeat" description="1">
    <location>
        <begin position="868"/>
        <end position="874"/>
    </location>
</feature>
<feature type="repeat" description="2">
    <location>
        <begin position="877"/>
        <end position="883"/>
    </location>
</feature>
<feature type="repeat" description="3">
    <location>
        <begin position="887"/>
        <end position="893"/>
    </location>
</feature>
<feature type="repeat" description="4">
    <location>
        <begin position="923"/>
        <end position="929"/>
    </location>
</feature>
<feature type="repeat" description="5">
    <location>
        <begin position="945"/>
        <end position="951"/>
    </location>
</feature>
<feature type="repeat" description="6">
    <location>
        <begin position="1003"/>
        <end position="1009"/>
    </location>
</feature>
<feature type="repeat" description="7">
    <location>
        <begin position="1020"/>
        <end position="1026"/>
    </location>
</feature>
<feature type="repeat" description="8">
    <location>
        <begin position="1031"/>
        <end position="1037"/>
    </location>
</feature>
<feature type="repeat" description="9">
    <location>
        <begin position="1048"/>
        <end position="1054"/>
    </location>
</feature>
<feature type="repeat" description="10">
    <location>
        <begin position="1065"/>
        <end position="1071"/>
    </location>
</feature>
<feature type="repeat" description="11">
    <location>
        <begin position="1084"/>
        <end position="1090"/>
    </location>
</feature>
<feature type="repeat" description="12">
    <location>
        <begin position="1129"/>
        <end position="1135"/>
    </location>
</feature>
<feature type="repeat" description="13">
    <location>
        <begin position="1155"/>
        <end position="1161"/>
    </location>
</feature>
<feature type="repeat" description="14">
    <location>
        <begin position="1170"/>
        <end position="1176"/>
    </location>
</feature>
<feature type="repeat" description="15">
    <location>
        <begin position="1185"/>
        <end position="1191"/>
    </location>
</feature>
<feature type="repeat" description="16">
    <location>
        <begin position="1200"/>
        <end position="1206"/>
    </location>
</feature>
<feature type="region of interest" description="Disordered" evidence="2">
    <location>
        <begin position="128"/>
        <end position="248"/>
    </location>
</feature>
<feature type="region of interest" description="Disordered" evidence="2">
    <location>
        <begin position="415"/>
        <end position="497"/>
    </location>
</feature>
<feature type="region of interest" description="Disordered" evidence="2">
    <location>
        <begin position="558"/>
        <end position="592"/>
    </location>
</feature>
<feature type="region of interest" description="Disordered" evidence="2">
    <location>
        <begin position="610"/>
        <end position="649"/>
    </location>
</feature>
<feature type="region of interest" description="Disordered" evidence="2">
    <location>
        <begin position="726"/>
        <end position="791"/>
    </location>
</feature>
<feature type="region of interest" description="Disordered" evidence="2">
    <location>
        <begin position="813"/>
        <end position="853"/>
    </location>
</feature>
<feature type="region of interest" description="16 X 7 AA approximate repeats of T-G-G-A-M-M-P">
    <location>
        <begin position="868"/>
        <end position="1205"/>
    </location>
</feature>
<feature type="compositionally biased region" description="Low complexity" evidence="2">
    <location>
        <begin position="140"/>
        <end position="159"/>
    </location>
</feature>
<feature type="compositionally biased region" description="Basic and acidic residues" evidence="2">
    <location>
        <begin position="171"/>
        <end position="184"/>
    </location>
</feature>
<feature type="compositionally biased region" description="Low complexity" evidence="2">
    <location>
        <begin position="199"/>
        <end position="214"/>
    </location>
</feature>
<feature type="compositionally biased region" description="Acidic residues" evidence="2">
    <location>
        <begin position="226"/>
        <end position="235"/>
    </location>
</feature>
<feature type="compositionally biased region" description="Basic residues" evidence="2">
    <location>
        <begin position="429"/>
        <end position="447"/>
    </location>
</feature>
<feature type="compositionally biased region" description="Basic residues" evidence="2">
    <location>
        <begin position="471"/>
        <end position="484"/>
    </location>
</feature>
<feature type="compositionally biased region" description="Basic and acidic residues" evidence="2">
    <location>
        <begin position="568"/>
        <end position="592"/>
    </location>
</feature>
<feature type="compositionally biased region" description="Basic and acidic residues" evidence="2">
    <location>
        <begin position="610"/>
        <end position="621"/>
    </location>
</feature>
<feature type="compositionally biased region" description="Low complexity" evidence="2">
    <location>
        <begin position="629"/>
        <end position="649"/>
    </location>
</feature>
<feature type="compositionally biased region" description="Polar residues" evidence="2">
    <location>
        <begin position="726"/>
        <end position="756"/>
    </location>
</feature>
<feature type="compositionally biased region" description="Low complexity" evidence="2">
    <location>
        <begin position="757"/>
        <end position="771"/>
    </location>
</feature>
<feature type="compositionally biased region" description="Low complexity" evidence="2">
    <location>
        <begin position="836"/>
        <end position="851"/>
    </location>
</feature>
<feature type="modified residue" description="Phosphoserine" evidence="26">
    <location>
        <position position="447"/>
    </location>
</feature>
<feature type="modified residue" description="Phosphoserine" evidence="26">
    <location>
        <position position="449"/>
    </location>
</feature>
<feature type="modified residue" description="Phosphoserine" evidence="26">
    <location>
        <position position="454"/>
    </location>
</feature>
<feature type="modified residue" description="Phosphoserine" evidence="25">
    <location>
        <position position="799"/>
    </location>
</feature>
<feature type="modified residue" description="Phosphothreonine" evidence="25">
    <location>
        <position position="831"/>
    </location>
</feature>
<feature type="modified residue" description="Phosphothreonine" evidence="25">
    <location>
        <position position="858"/>
    </location>
</feature>
<feature type="modified residue" description="Phosphothreonine" evidence="25 26">
    <location>
        <position position="887"/>
    </location>
</feature>
<feature type="modified residue" description="Phosphothreonine" evidence="25 26">
    <location>
        <position position="904"/>
    </location>
</feature>
<feature type="modified residue" description="Phosphothreonine" evidence="25 26">
    <location>
        <position position="984"/>
    </location>
</feature>
<feature type="modified residue" description="Phosphothreonine" evidence="26">
    <location>
        <position position="993"/>
    </location>
</feature>
<feature type="modified residue" description="Phosphoserine" evidence="25 26">
    <location>
        <position position="996"/>
    </location>
</feature>
<feature type="modified residue" description="Phosphothreonine" evidence="26">
    <location>
        <position position="1075"/>
    </location>
</feature>
<feature type="cross-link" description="Glycyl lysine isopeptide (Lys-Gly) (interchain with G-Cter in ubiquitin)" evidence="27">
    <location>
        <position position="471"/>
    </location>
</feature>
<feature type="cross-link" description="Glycyl lysine isopeptide (Lys-Gly) (interchain with G-Cter in ubiquitin)" evidence="27">
    <location>
        <position position="548"/>
    </location>
</feature>
<feature type="strand" evidence="30">
    <location>
        <begin position="357"/>
        <end position="360"/>
    </location>
</feature>
<feature type="strand" evidence="30">
    <location>
        <begin position="379"/>
        <end position="387"/>
    </location>
</feature>
<feature type="strand" evidence="30">
    <location>
        <begin position="389"/>
        <end position="396"/>
    </location>
</feature>
<feature type="turn" evidence="30">
    <location>
        <begin position="397"/>
        <end position="399"/>
    </location>
</feature>
<feature type="strand" evidence="30">
    <location>
        <begin position="402"/>
        <end position="406"/>
    </location>
</feature>
<feature type="helix" evidence="30">
    <location>
        <begin position="407"/>
        <end position="409"/>
    </location>
</feature>
<feature type="strand" evidence="30">
    <location>
        <begin position="410"/>
        <end position="412"/>
    </location>
</feature>
<feature type="turn" evidence="29">
    <location>
        <begin position="413"/>
        <end position="415"/>
    </location>
</feature>
<feature type="strand" evidence="28">
    <location>
        <begin position="497"/>
        <end position="505"/>
    </location>
</feature>
<feature type="strand" evidence="28">
    <location>
        <begin position="508"/>
        <end position="517"/>
    </location>
</feature>
<feature type="strand" evidence="28">
    <location>
        <begin position="520"/>
        <end position="524"/>
    </location>
</feature>
<feature type="strand" evidence="28">
    <location>
        <begin position="530"/>
        <end position="534"/>
    </location>
</feature>
<feature type="helix" evidence="28">
    <location>
        <begin position="540"/>
        <end position="550"/>
    </location>
</feature>
<feature type="helix" evidence="28">
    <location>
        <begin position="555"/>
        <end position="557"/>
    </location>
</feature>
<feature type="helix" evidence="31">
    <location>
        <begin position="657"/>
        <end position="663"/>
    </location>
</feature>
<feature type="helix" evidence="31">
    <location>
        <begin position="668"/>
        <end position="680"/>
    </location>
</feature>
<feature type="helix" evidence="31">
    <location>
        <begin position="685"/>
        <end position="690"/>
    </location>
</feature>
<feature type="helix" evidence="31">
    <location>
        <begin position="693"/>
        <end position="698"/>
    </location>
</feature>
<feature type="helix" evidence="31">
    <location>
        <begin position="703"/>
        <end position="716"/>
    </location>
</feature>
<reference key="1">
    <citation type="journal article" date="1993" name="J. Cell Biol.">
        <title>Synthetic-lethal interactions identify two novel genes, SLA1 and SLA2, that control membrane cytoskeleton assembly in Saccharomyces cerevisiae.</title>
        <authorList>
            <person name="Holtzman D.A."/>
            <person name="Yang S."/>
            <person name="Drubin D.G."/>
        </authorList>
    </citation>
    <scope>NUCLEOTIDE SEQUENCE [GENOMIC DNA]</scope>
    <scope>FUNCTION</scope>
    <source>
        <strain>DDY 228</strain>
    </source>
</reference>
<reference key="2">
    <citation type="journal article" date="1992" name="Yeast">
        <title>Sequence of a 12.7 kb segment of yeast chromosome II identifies a PDR-like gene and several new open reading frames.</title>
        <authorList>
            <person name="Delaveau T."/>
            <person name="Jacq C."/>
            <person name="Perea J."/>
        </authorList>
    </citation>
    <scope>NUCLEOTIDE SEQUENCE [GENOMIC DNA]</scope>
    <source>
        <strain>ATCC 204508 / S288c</strain>
    </source>
</reference>
<reference key="3">
    <citation type="journal article" date="1994" name="EMBO J.">
        <title>Complete DNA sequence of yeast chromosome II.</title>
        <authorList>
            <person name="Feldmann H."/>
            <person name="Aigle M."/>
            <person name="Aljinovic G."/>
            <person name="Andre B."/>
            <person name="Baclet M.C."/>
            <person name="Barthe C."/>
            <person name="Baur A."/>
            <person name="Becam A.-M."/>
            <person name="Biteau N."/>
            <person name="Boles E."/>
            <person name="Brandt T."/>
            <person name="Brendel M."/>
            <person name="Brueckner M."/>
            <person name="Bussereau F."/>
            <person name="Christiansen C."/>
            <person name="Contreras R."/>
            <person name="Crouzet M."/>
            <person name="Cziepluch C."/>
            <person name="Demolis N."/>
            <person name="Delaveau T."/>
            <person name="Doignon F."/>
            <person name="Domdey H."/>
            <person name="Duesterhus S."/>
            <person name="Dubois E."/>
            <person name="Dujon B."/>
            <person name="El Bakkoury M."/>
            <person name="Entian K.-D."/>
            <person name="Feuermann M."/>
            <person name="Fiers W."/>
            <person name="Fobo G.M."/>
            <person name="Fritz C."/>
            <person name="Gassenhuber J."/>
            <person name="Glansdorff N."/>
            <person name="Goffeau A."/>
            <person name="Grivell L.A."/>
            <person name="de Haan M."/>
            <person name="Hein C."/>
            <person name="Herbert C.J."/>
            <person name="Hollenberg C.P."/>
            <person name="Holmstroem K."/>
            <person name="Jacq C."/>
            <person name="Jacquet M."/>
            <person name="Jauniaux J.-C."/>
            <person name="Jonniaux J.-L."/>
            <person name="Kallesoee T."/>
            <person name="Kiesau P."/>
            <person name="Kirchrath L."/>
            <person name="Koetter P."/>
            <person name="Korol S."/>
            <person name="Liebl S."/>
            <person name="Logghe M."/>
            <person name="Lohan A.J.E."/>
            <person name="Louis E.J."/>
            <person name="Li Z.Y."/>
            <person name="Maat M.J."/>
            <person name="Mallet L."/>
            <person name="Mannhaupt G."/>
            <person name="Messenguy F."/>
            <person name="Miosga T."/>
            <person name="Molemans F."/>
            <person name="Mueller S."/>
            <person name="Nasr F."/>
            <person name="Obermaier B."/>
            <person name="Perea J."/>
            <person name="Pierard A."/>
            <person name="Piravandi E."/>
            <person name="Pohl F.M."/>
            <person name="Pohl T.M."/>
            <person name="Potier S."/>
            <person name="Proft M."/>
            <person name="Purnelle B."/>
            <person name="Ramezani Rad M."/>
            <person name="Rieger M."/>
            <person name="Rose M."/>
            <person name="Schaaff-Gerstenschlaeger I."/>
            <person name="Scherens B."/>
            <person name="Schwarzlose C."/>
            <person name="Skala J."/>
            <person name="Slonimski P.P."/>
            <person name="Smits P.H.M."/>
            <person name="Souciet J.-L."/>
            <person name="Steensma H.Y."/>
            <person name="Stucka R."/>
            <person name="Urrestarazu L.A."/>
            <person name="van der Aart Q.J.M."/>
            <person name="Van Dyck L."/>
            <person name="Vassarotti A."/>
            <person name="Vetter I."/>
            <person name="Vierendeels F."/>
            <person name="Vissers S."/>
            <person name="Wagner G."/>
            <person name="de Wergifosse P."/>
            <person name="Wolfe K.H."/>
            <person name="Zagulski M."/>
            <person name="Zimmermann F.K."/>
            <person name="Mewes H.-W."/>
            <person name="Kleine K."/>
        </authorList>
    </citation>
    <scope>NUCLEOTIDE SEQUENCE [LARGE SCALE GENOMIC DNA]</scope>
    <source>
        <strain>ATCC 204508 / S288c</strain>
    </source>
</reference>
<reference key="4">
    <citation type="journal article" date="2014" name="G3 (Bethesda)">
        <title>The reference genome sequence of Saccharomyces cerevisiae: Then and now.</title>
        <authorList>
            <person name="Engel S.R."/>
            <person name="Dietrich F.S."/>
            <person name="Fisk D.G."/>
            <person name="Binkley G."/>
            <person name="Balakrishnan R."/>
            <person name="Costanzo M.C."/>
            <person name="Dwight S.S."/>
            <person name="Hitz B.C."/>
            <person name="Karra K."/>
            <person name="Nash R.S."/>
            <person name="Weng S."/>
            <person name="Wong E.D."/>
            <person name="Lloyd P."/>
            <person name="Skrzypek M.S."/>
            <person name="Miyasato S.R."/>
            <person name="Simison M."/>
            <person name="Cherry J.M."/>
        </authorList>
    </citation>
    <scope>GENOME REANNOTATION</scope>
    <source>
        <strain>ATCC 204508 / S288c</strain>
    </source>
</reference>
<reference key="5">
    <citation type="journal article" date="1996" name="Mol. Cell. Biol.">
        <title>The EH-domain-containing protein Pan1 is required for normal organization of the actin cytoskeleton in Saccharomyces cerevisiae.</title>
        <authorList>
            <person name="Tang H.-Y."/>
            <person name="Cai M."/>
        </authorList>
    </citation>
    <scope>FUNCTION</scope>
</reference>
<reference key="6">
    <citation type="journal article" date="1997" name="J. Cell Biol.">
        <title>A role for the actin cytoskeleton of Saccharomyces cerevisiae in bipolar bud-site selection.</title>
        <authorList>
            <person name="Yang S."/>
            <person name="Ayscough K.R."/>
            <person name="Drubin D.G."/>
        </authorList>
    </citation>
    <scope>FUNCTION</scope>
</reference>
<reference key="7">
    <citation type="journal article" date="1997" name="J. Cell Biol.">
        <title>Bee1, a yeast protein with homology to Wiscott-Aldrich syndrome protein, is critical for the assembly of cortical actin cytoskeleton.</title>
        <authorList>
            <person name="Li R."/>
        </authorList>
    </citation>
    <scope>INTERACTION WITH LAS17</scope>
</reference>
<reference key="8">
    <citation type="journal article" date="1997" name="J. Cell Biol.">
        <title>High rates of actin filament turnover in budding yeast and roles for actin in establishment and maintenance of cell polarity revealed using the actin inhibitor latrunculin-A.</title>
        <authorList>
            <person name="Ayscough K.R."/>
            <person name="Stryker J."/>
            <person name="Pokala N."/>
            <person name="Sanders M."/>
            <person name="Crews P."/>
            <person name="Drubin D.G."/>
        </authorList>
    </citation>
    <scope>FUNCTION</scope>
</reference>
<reference key="9">
    <citation type="journal article" date="1999" name="Mol. Biol. Cell">
        <title>Sla1p is a functionally modular component of the yeast cortical actin cytoskeleton required for correct localization of both Rho1p-GTPase and Sla2p, a protein with talin homology.</title>
        <authorList>
            <person name="Ayscough K.R."/>
            <person name="Eby J.J."/>
            <person name="Lila T."/>
            <person name="Dewar H."/>
            <person name="Kozminski K.G."/>
            <person name="Drubin D.G."/>
        </authorList>
    </citation>
    <scope>SUBCELLULAR LOCATION</scope>
    <scope>FUNCTION</scope>
</reference>
<reference key="10">
    <citation type="journal article" date="2000" name="Mol. Cell. Biol.">
        <title>Pan1p, End3p, and Sla1p, three yeast proteins required for normal cortical actin cytoskeleton organization, associate with each other and play essential roles in cell wall morphogenesis.</title>
        <authorList>
            <person name="Tang H.-Y."/>
            <person name="Xu J."/>
            <person name="Cai M."/>
        </authorList>
    </citation>
    <scope>FUNCTION</scope>
    <scope>IDENTIFICATION IN THE PAN1 COMPLEX</scope>
</reference>
<reference key="11">
    <citation type="journal article" date="2001" name="Mol. Biol. Cell">
        <title>Regulation of yeast actin cytoskeleton-regulatory complex Pan1p/Sla1p/End3p by serine/threonine kinase Prk1p.</title>
        <authorList>
            <person name="Zeng G."/>
            <person name="Yu X."/>
            <person name="Cai M."/>
        </authorList>
    </citation>
    <scope>IDENTIFICATION IN THE PAN1 COMPLEX</scope>
    <scope>PHOSPHORYLATION BY PRK1</scope>
    <scope>SUBCELLULAR LOCATION</scope>
</reference>
<reference key="12">
    <citation type="journal article" date="2002" name="J. Cell Biol.">
        <title>Sla1p serves as the targeting signal recognition factor for NPFX(1,2)D-mediated endocytosis.</title>
        <authorList>
            <person name="Howard J.P."/>
            <person name="Hutton J.L."/>
            <person name="Olson J.M."/>
            <person name="Payne G.S."/>
        </authorList>
    </citation>
    <scope>FUNCTION</scope>
</reference>
<reference key="13">
    <citation type="journal article" date="2002" name="J. Cell Sci.">
        <title>Sla1p couples the yeast endocytic machinery to proteins regulating actin dynamics.</title>
        <authorList>
            <person name="Warren D.T."/>
            <person name="Andrews P.D."/>
            <person name="Gourlay C.W."/>
            <person name="Ayscough K.R."/>
        </authorList>
    </citation>
    <scope>FUNCTION</scope>
    <scope>SUBCELLULAR LOCATION</scope>
    <scope>INTERACTION WITH ABP1 AND LAS17</scope>
</reference>
<reference key="14">
    <citation type="journal article" date="2002" name="Mol. Biol. Cell">
        <title>Novel proteins linking the actin cytoskeleton to the endocytic machinery in Saccharomyces cerevisiae.</title>
        <authorList>
            <person name="Dewar H."/>
            <person name="Warren D.T."/>
            <person name="Gardiner F.C."/>
            <person name="Gourlay C.G."/>
            <person name="Satish N."/>
            <person name="Richardson M.R."/>
            <person name="Andrews P.D."/>
            <person name="Ayscough K.R."/>
        </authorList>
    </citation>
    <scope>FUNCTION</scope>
    <scope>INTERACTION WITH LSB5 AND YSC84</scope>
</reference>
<reference key="15">
    <citation type="journal article" date="2002" name="Yeast">
        <title>Actin patch assembly proteins Las17p and Sla1p restrict cell wall growth to daughter cells and interact with cis-Golgi protein Kre6p.</title>
        <authorList>
            <person name="Li H."/>
            <person name="Page N."/>
            <person name="Bussey H."/>
        </authorList>
    </citation>
    <scope>FUNCTION</scope>
    <scope>INTERACTION WITH KRE6</scope>
</reference>
<reference key="16">
    <citation type="journal article" date="2003" name="Curr. Biol.">
        <title>Negative regulation of yeast WASp by two SH3 domain-containing proteins.</title>
        <authorList>
            <person name="Rodal A.A."/>
            <person name="Manning A.L."/>
            <person name="Goode B.L."/>
            <person name="Drubin D.G."/>
        </authorList>
    </citation>
    <scope>FUNCTION</scope>
</reference>
<reference key="17">
    <citation type="journal article" date="2003" name="J. Cell Sci.">
        <title>An interaction between Sla1p and Sla2p plays a role in regulating actin dynamics and endocytosis in budding yeast.</title>
        <authorList>
            <person name="Gourlay C.W."/>
            <person name="Dewar H."/>
            <person name="Warren D.T."/>
            <person name="Costa R."/>
            <person name="Satish N."/>
            <person name="Ayscough K.R."/>
        </authorList>
    </citation>
    <scope>FUNCTION</scope>
    <scope>SUBCELLULAR LOCATION</scope>
    <scope>INTERACTION WITH SLA2</scope>
</reference>
<reference key="18">
    <citation type="journal article" date="2003" name="Nature">
        <title>Global analysis of protein localization in budding yeast.</title>
        <authorList>
            <person name="Huh W.-K."/>
            <person name="Falvo J.V."/>
            <person name="Gerke L.C."/>
            <person name="Carroll A.S."/>
            <person name="Howson R.W."/>
            <person name="Weissman J.S."/>
            <person name="O'Shea E.K."/>
        </authorList>
    </citation>
    <scope>SUBCELLULAR LOCATION [LARGE SCALE ANALYSIS]</scope>
</reference>
<reference key="19">
    <citation type="journal article" date="2003" name="Nature">
        <title>Global analysis of protein expression in yeast.</title>
        <authorList>
            <person name="Ghaemmaghami S."/>
            <person name="Huh W.-K."/>
            <person name="Bower K."/>
            <person name="Howson R.W."/>
            <person name="Belle A."/>
            <person name="Dephoure N."/>
            <person name="O'Shea E.K."/>
            <person name="Weissman J.S."/>
        </authorList>
    </citation>
    <scope>LEVEL OF PROTEIN EXPRESSION [LARGE SCALE ANALYSIS]</scope>
</reference>
<reference key="20">
    <citation type="journal article" date="2004" name="J. Biol. Chem.">
        <title>The Rsp5 ubiquitin ligase binds to and ubiquitinates members of the yeast CIN85-endophilin complex, Sla1-Rvs167.</title>
        <authorList>
            <person name="Stamenova S.D."/>
            <person name="Dunn R."/>
            <person name="Adler A.S."/>
            <person name="Hicke L."/>
        </authorList>
    </citation>
    <scope>FUNCTION</scope>
    <scope>INTERACTION WITH RSP5 AND RVS167</scope>
</reference>
<reference key="21">
    <citation type="journal article" date="2005" name="Biochem. J.">
        <title>Lsb5p interacts with actin regulators Sla1p and Las17p, ubiquitin and Arf3p to couple actin dynamics to membrane trafficking processes.</title>
        <authorList>
            <person name="Costa R."/>
            <person name="Warren D.T."/>
            <person name="Ayscough K.R."/>
        </authorList>
    </citation>
    <scope>INTERACTION WITH LSB5</scope>
</reference>
<reference key="22">
    <citation type="journal article" date="2004" name="J. Cell Sci.">
        <title>The yeast dynamin-related GTPase Vps1p functions in the organization of the actin cytoskeleton via interaction with Sla1p.</title>
        <authorList>
            <person name="Yu X."/>
            <person name="Cai M."/>
        </authorList>
    </citation>
    <scope>INTERACTION WITH VPS1</scope>
</reference>
<reference key="23">
    <citation type="journal article" date="2005" name="Mol. Biol. Cell">
        <title>Actin and septin ultrastructures at the budding yeast cell cortex.</title>
        <authorList>
            <person name="Rodal A.A."/>
            <person name="Kozubowski L."/>
            <person name="Goode B.L."/>
            <person name="Drubin D.G."/>
            <person name="Hartwig J.H."/>
        </authorList>
    </citation>
    <scope>FUNCTION</scope>
</reference>
<reference key="24">
    <citation type="journal article" date="2007" name="J. Proteome Res.">
        <title>Large-scale phosphorylation analysis of alpha-factor-arrested Saccharomyces cerevisiae.</title>
        <authorList>
            <person name="Li X."/>
            <person name="Gerber S.A."/>
            <person name="Rudner A.D."/>
            <person name="Beausoleil S.A."/>
            <person name="Haas W."/>
            <person name="Villen J."/>
            <person name="Elias J.E."/>
            <person name="Gygi S.P."/>
        </authorList>
    </citation>
    <scope>IDENTIFICATION BY MASS SPECTROMETRY [LARGE SCALE ANALYSIS]</scope>
    <source>
        <strain>ADR376</strain>
    </source>
</reference>
<reference key="25">
    <citation type="journal article" date="2007" name="Traffic">
        <title>Nucleocytoplasmic trafficking is required for functioning of the adaptor protein Sla1p in endocytosis.</title>
        <authorList>
            <person name="Gardiner F.C."/>
            <person name="Costa R."/>
            <person name="Ayscough K.R."/>
        </authorList>
    </citation>
    <scope>SUBCELLULAR LOCATION</scope>
    <scope>FUNCTION</scope>
</reference>
<reference key="26">
    <citation type="journal article" date="2008" name="Mol. Biol. Cell">
        <title>A novel function of Arp2p in mediating Prk1p-specific regulation of actin and endocytosis in yeast.</title>
        <authorList>
            <person name="Jin M."/>
            <person name="Cai M."/>
        </authorList>
    </citation>
    <scope>PHOSPHORYLATION BY ARK1</scope>
</reference>
<reference key="27">
    <citation type="journal article" date="2008" name="Mol. Cell. Proteomics">
        <title>A multidimensional chromatography technology for in-depth phosphoproteome analysis.</title>
        <authorList>
            <person name="Albuquerque C.P."/>
            <person name="Smolka M.B."/>
            <person name="Payne S.H."/>
            <person name="Bafna V."/>
            <person name="Eng J."/>
            <person name="Zhou H."/>
        </authorList>
    </citation>
    <scope>PHOSPHORYLATION [LARGE SCALE ANALYSIS] AT SER-799; THR-831; THR-858; THR-887; THR-904; THR-984 AND SER-996</scope>
    <scope>IDENTIFICATION BY MASS SPECTROMETRY [LARGE SCALE ANALYSIS]</scope>
</reference>
<reference key="28">
    <citation type="journal article" date="2009" name="Science">
        <title>Global analysis of Cdk1 substrate phosphorylation sites provides insights into evolution.</title>
        <authorList>
            <person name="Holt L.J."/>
            <person name="Tuch B.B."/>
            <person name="Villen J."/>
            <person name="Johnson A.D."/>
            <person name="Gygi S.P."/>
            <person name="Morgan D.O."/>
        </authorList>
    </citation>
    <scope>PHOSPHORYLATION [LARGE SCALE ANALYSIS] AT SER-447; SER-449; SER-454; THR-887; THR-904; THR-984; THR-993; SER-996 AND THR-1075</scope>
    <scope>IDENTIFICATION BY MASS SPECTROMETRY [LARGE SCALE ANALYSIS]</scope>
</reference>
<reference key="29">
    <citation type="journal article" date="2012" name="Proc. Natl. Acad. Sci. U.S.A.">
        <title>N-terminal acetylome analyses and functional insights of the N-terminal acetyltransferase NatB.</title>
        <authorList>
            <person name="Van Damme P."/>
            <person name="Lasa M."/>
            <person name="Polevoda B."/>
            <person name="Gazquez C."/>
            <person name="Elosegui-Artola A."/>
            <person name="Kim D.S."/>
            <person name="De Juan-Pardo E."/>
            <person name="Demeyer K."/>
            <person name="Hole K."/>
            <person name="Larrea E."/>
            <person name="Timmerman E."/>
            <person name="Prieto J."/>
            <person name="Arnesen T."/>
            <person name="Sherman F."/>
            <person name="Gevaert K."/>
            <person name="Aldabe R."/>
        </authorList>
    </citation>
    <scope>IDENTIFICATION BY MASS SPECTROMETRY [LARGE SCALE ANALYSIS]</scope>
</reference>
<reference key="30">
    <citation type="journal article" date="2012" name="Proteomics">
        <title>Sites of ubiquitin attachment in Saccharomyces cerevisiae.</title>
        <authorList>
            <person name="Starita L.M."/>
            <person name="Lo R.S."/>
            <person name="Eng J.K."/>
            <person name="von Haller P.D."/>
            <person name="Fields S."/>
        </authorList>
    </citation>
    <scope>UBIQUITINATION [LARGE SCALE ANALYSIS] AT LYS-471 AND LYS-548</scope>
    <scope>IDENTIFICATION BY MASS SPECTROMETRY [LARGE SCALE ANALYSIS]</scope>
</reference>
<reference key="31">
    <citation type="journal article" date="2007" name="EMBO J.">
        <title>Structure of Sla1p homology domain 1 and interaction with the NPFxD endocytic internalization motif.</title>
        <authorList>
            <person name="Mahadev R.K."/>
            <person name="Di Pietro S.M."/>
            <person name="Olson J.M."/>
            <person name="Piao H.L."/>
            <person name="Payne G.S."/>
            <person name="Overduin M."/>
        </authorList>
    </citation>
    <scope>STRUCTURE BY NMR OF 495-560</scope>
    <scope>DOMAIN</scope>
</reference>
<reference key="32">
    <citation type="journal article" date="2007" name="J. Mol. Biol.">
        <title>Structural basis for ubiquitin recognition by SH3 domains.</title>
        <authorList>
            <person name="He Y."/>
            <person name="Hicke L."/>
            <person name="Radhakrishnan I."/>
        </authorList>
    </citation>
    <scope>STRUCTURE BY NMR OF 350-420</scope>
    <scope>DOMAIN</scope>
</reference>
<comment type="function">
    <text evidence="3 4 6 7 8 9 10 11 13 15 17 19 20 21 23">Component of the PAN1 actin cytoskeleton-regulatory complex required for the internalization of endosomes during actin-coupled endocytosis. The complex links the site of endocytosis to the cell membrane-associated actin cytoskeleton. Mediates uptake of external molecules and vacuolar degradation of plasma membrane proteins. Plays a role in the proper organization of the cell membrane-associated actin cytoskeleton and promotes its destabilization.</text>
</comment>
<comment type="subunit">
    <text evidence="4 5 7 8 9 10 13 14 16 22">Component of the PAN1 actin cytoskeleton-regulatory complex. Interacts with ABP1, KRE6, LAS17, LSB5, RSP5, RVS167, VPS1 and YSC84.</text>
</comment>
<comment type="interaction">
    <interactant intactId="EBI-17313">
        <id>P32790</id>
    </interactant>
    <interactant intactId="EBI-2036">
        <id>P15891</id>
        <label>ABP1</label>
    </interactant>
    <organismsDiffer>false</organismsDiffer>
    <experiments>4</experiments>
</comment>
<comment type="interaction">
    <interactant intactId="EBI-17313">
        <id>P32790</id>
    </interactant>
    <interactant intactId="EBI-25376">
        <id>P40563</id>
        <label>AIM21</label>
    </interactant>
    <organismsDiffer>false</organismsDiffer>
    <experiments>4</experiments>
</comment>
<comment type="interaction">
    <interactant intactId="EBI-17313">
        <id>P32790</id>
    </interactant>
    <interactant intactId="EBI-28798">
        <id>P53933</id>
        <label>APP1</label>
    </interactant>
    <organismsDiffer>false</organismsDiffer>
    <experiments>4</experiments>
</comment>
<comment type="interaction">
    <interactant intactId="EBI-17313">
        <id>P32790</id>
    </interactant>
    <interactant intactId="EBI-37047">
        <id>Q06604</id>
        <label>BSP1</label>
    </interactant>
    <organismsDiffer>false</organismsDiffer>
    <experiments>5</experiments>
</comment>
<comment type="interaction">
    <interactant intactId="EBI-17313">
        <id>P32790</id>
    </interactant>
    <interactant intactId="EBI-4766">
        <id>P22137</id>
        <label>CHC1</label>
    </interactant>
    <organismsDiffer>false</organismsDiffer>
    <experiments>4</experiments>
</comment>
<comment type="interaction">
    <interactant intactId="EBI-17313">
        <id>P32790</id>
    </interactant>
    <interactant intactId="EBI-26215">
        <id>P32525</id>
        <label>ECM25</label>
    </interactant>
    <organismsDiffer>false</organismsDiffer>
    <experiments>5</experiments>
</comment>
<comment type="interaction">
    <interactant intactId="EBI-17313">
        <id>P32790</id>
    </interactant>
    <interactant intactId="EBI-6460">
        <id>P39013</id>
        <label>END3</label>
    </interactant>
    <organismsDiffer>false</organismsDiffer>
    <experiments>5</experiments>
</comment>
<comment type="interaction">
    <interactant intactId="EBI-17313">
        <id>P32790</id>
    </interactant>
    <interactant intactId="EBI-9658">
        <id>P13134</id>
        <label>KEX2</label>
    </interactant>
    <organismsDiffer>false</organismsDiffer>
    <experiments>16</experiments>
</comment>
<comment type="interaction">
    <interactant intactId="EBI-17313">
        <id>P32790</id>
    </interactant>
    <interactant intactId="EBI-10022">
        <id>Q12446</id>
        <label>LAS17</label>
    </interactant>
    <organismsDiffer>false</organismsDiffer>
    <experiments>8</experiments>
</comment>
<comment type="interaction">
    <interactant intactId="EBI-17313">
        <id>P32790</id>
    </interactant>
    <interactant intactId="EBI-22980">
        <id>P43603</id>
        <label>LSB3</label>
    </interactant>
    <organismsDiffer>false</organismsDiffer>
    <experiments>7</experiments>
</comment>
<comment type="interaction">
    <interactant intactId="EBI-17313">
        <id>P32790</id>
    </interactant>
    <interactant intactId="EBI-10218">
        <id>P25369</id>
        <label>LSB5</label>
    </interactant>
    <organismsDiffer>false</organismsDiffer>
    <experiments>5</experiments>
</comment>
<comment type="interaction">
    <interactant intactId="EBI-17313">
        <id>P32790</id>
    </interactant>
    <interactant intactId="EBI-11224">
        <id>P54199</id>
        <label>MPS1</label>
    </interactant>
    <organismsDiffer>false</organismsDiffer>
    <experiments>2</experiments>
</comment>
<comment type="interaction">
    <interactant intactId="EBI-17313">
        <id>P32790</id>
    </interactant>
    <interactant intactId="EBI-11687">
        <id>Q04439</id>
        <label>MYO5</label>
    </interactant>
    <organismsDiffer>false</organismsDiffer>
    <experiments>3</experiments>
</comment>
<comment type="interaction">
    <interactant intactId="EBI-17313">
        <id>P32790</id>
    </interactant>
    <interactant intactId="EBI-12875">
        <id>P32521</id>
        <label>PAN1</label>
    </interactant>
    <organismsDiffer>false</organismsDiffer>
    <experiments>6</experiments>
</comment>
<comment type="interaction">
    <interactant intactId="EBI-17313">
        <id>P32790</id>
    </interactant>
    <interactant intactId="EBI-16019">
        <id>P25368</id>
        <label>RRP7</label>
    </interactant>
    <organismsDiffer>false</organismsDiffer>
    <experiments>3</experiments>
</comment>
<comment type="interaction">
    <interactant intactId="EBI-17313">
        <id>P32790</id>
    </interactant>
    <interactant intactId="EBI-17313">
        <id>P32790</id>
        <label>SLA1</label>
    </interactant>
    <organismsDiffer>false</organismsDiffer>
    <experiments>10</experiments>
</comment>
<comment type="interaction">
    <interactant intactId="EBI-17313">
        <id>P32790</id>
    </interactant>
    <interactant intactId="EBI-17323">
        <id>P33338</id>
        <label>SLA2</label>
    </interactant>
    <organismsDiffer>false</organismsDiffer>
    <experiments>3</experiments>
</comment>
<comment type="interaction">
    <interactant intactId="EBI-17313">
        <id>P32790</id>
    </interactant>
    <interactant intactId="EBI-18344">
        <id>Q02794</id>
        <label>STD1</label>
    </interactant>
    <organismsDiffer>false</organismsDiffer>
    <experiments>3</experiments>
</comment>
<comment type="interaction">
    <interactant intactId="EBI-17313">
        <id>P32790</id>
    </interactant>
    <interactant intactId="EBI-20502">
        <id>P37370</id>
        <label>VRP1</label>
    </interactant>
    <organismsDiffer>false</organismsDiffer>
    <experiments>3</experiments>
</comment>
<comment type="interaction">
    <interactant intactId="EBI-17313">
        <id>P32790</id>
    </interactant>
    <interactant intactId="EBI-24460">
        <id>P32793</id>
        <label>YSC84</label>
    </interactant>
    <organismsDiffer>false</organismsDiffer>
    <experiments>7</experiments>
</comment>
<comment type="interaction">
    <interactant intactId="EBI-17313">
        <id>P32790</id>
    </interactant>
    <interactant intactId="EBI-29637">
        <id>P54786</id>
        <label>ZDS2</label>
    </interactant>
    <organismsDiffer>false</organismsDiffer>
    <experiments>3</experiments>
</comment>
<comment type="subcellular location">
    <subcellularLocation>
        <location>Nucleus</location>
    </subcellularLocation>
    <subcellularLocation>
        <location>Cell membrane</location>
        <topology>Peripheral membrane protein</topology>
        <orientation>Cytoplasmic side</orientation>
    </subcellularLocation>
    <subcellularLocation>
        <location>Endosome membrane</location>
        <topology>Peripheral membrane protein</topology>
        <orientation>Cytoplasmic side</orientation>
    </subcellularLocation>
    <subcellularLocation>
        <location>Cytoplasm</location>
        <location>Cytoskeleton</location>
        <location>Actin patch</location>
    </subcellularLocation>
    <text>Cytoplasmic and cortical actin patches. Is associated with cortical actin patches in its dephosphorylated form and dissociates upon phosphorylation by PRK1.</text>
</comment>
<comment type="PTM">
    <text evidence="5 18">Phosphorylated by PRK1.</text>
</comment>
<comment type="miscellaneous">
    <text evidence="12">Present with 952 molecules/cell in log phase SD medium.</text>
</comment>
<comment type="similarity">
    <text evidence="24">Belongs to the SLA1 family.</text>
</comment>